<keyword id="KW-0066">ATP synthesis</keyword>
<keyword id="KW-0997">Cell inner membrane</keyword>
<keyword id="KW-1003">Cell membrane</keyword>
<keyword id="KW-0138">CF(0)</keyword>
<keyword id="KW-0375">Hydrogen ion transport</keyword>
<keyword id="KW-0406">Ion transport</keyword>
<keyword id="KW-0472">Membrane</keyword>
<keyword id="KW-1185">Reference proteome</keyword>
<keyword id="KW-0812">Transmembrane</keyword>
<keyword id="KW-1133">Transmembrane helix</keyword>
<keyword id="KW-0813">Transport</keyword>
<reference key="1">
    <citation type="journal article" date="2005" name="Infect. Immun.">
        <title>Whole-genome analyses of speciation events in pathogenic Brucellae.</title>
        <authorList>
            <person name="Chain P.S."/>
            <person name="Comerci D.J."/>
            <person name="Tolmasky M.E."/>
            <person name="Larimer F.W."/>
            <person name="Malfatti S.A."/>
            <person name="Vergez L.M."/>
            <person name="Aguero F."/>
            <person name="Land M.L."/>
            <person name="Ugalde R.A."/>
            <person name="Garcia E."/>
        </authorList>
    </citation>
    <scope>NUCLEOTIDE SEQUENCE [LARGE SCALE GENOMIC DNA]</scope>
    <source>
        <strain>2308</strain>
    </source>
</reference>
<name>ATPF2_BRUA2</name>
<accession>Q2YMC4</accession>
<comment type="function">
    <text evidence="1">F(1)F(0) ATP synthase produces ATP from ADP in the presence of a proton or sodium gradient. F-type ATPases consist of two structural domains, F(1) containing the extramembraneous catalytic core and F(0) containing the membrane proton channel, linked together by a central stalk and a peripheral stalk. During catalysis, ATP synthesis in the catalytic domain of F(1) is coupled via a rotary mechanism of the central stalk subunits to proton translocation.</text>
</comment>
<comment type="function">
    <text evidence="1">Component of the F(0) channel, it forms part of the peripheral stalk, linking F(1) to F(0).</text>
</comment>
<comment type="subunit">
    <text evidence="1">F-type ATPases have 2 components, F(1) - the catalytic core - and F(0) - the membrane proton channel. F(1) has five subunits: alpha(3), beta(3), gamma(1), delta(1), epsilon(1). F(0) has three main subunits: a(1), b(2) and c(10-14). The alpha and beta chains form an alternating ring which encloses part of the gamma chain. F(1) is attached to F(0) by a central stalk formed by the gamma and epsilon chains, while a peripheral stalk is formed by the delta and b chains.</text>
</comment>
<comment type="subcellular location">
    <subcellularLocation>
        <location evidence="1">Cell inner membrane</location>
        <topology evidence="1">Single-pass membrane protein</topology>
    </subcellularLocation>
</comment>
<comment type="similarity">
    <text evidence="1">Belongs to the ATPase B chain family.</text>
</comment>
<gene>
    <name evidence="1" type="primary">atpF2</name>
    <name type="ordered locus">BAB1_0414</name>
</gene>
<dbReference type="EMBL" id="AM040264">
    <property type="protein sequence ID" value="CAJ10370.1"/>
    <property type="molecule type" value="Genomic_DNA"/>
</dbReference>
<dbReference type="RefSeq" id="WP_002963546.1">
    <property type="nucleotide sequence ID" value="NZ_KN046823.1"/>
</dbReference>
<dbReference type="SMR" id="Q2YMC4"/>
<dbReference type="STRING" id="359391.BAB1_0414"/>
<dbReference type="KEGG" id="bmf:BAB1_0414"/>
<dbReference type="PATRIC" id="fig|359391.11.peg.2458"/>
<dbReference type="HOGENOM" id="CLU_079215_6_1_5"/>
<dbReference type="PhylomeDB" id="Q2YMC4"/>
<dbReference type="Proteomes" id="UP000002719">
    <property type="component" value="Chromosome I"/>
</dbReference>
<dbReference type="GO" id="GO:0005886">
    <property type="term" value="C:plasma membrane"/>
    <property type="evidence" value="ECO:0007669"/>
    <property type="project" value="UniProtKB-SubCell"/>
</dbReference>
<dbReference type="GO" id="GO:0045259">
    <property type="term" value="C:proton-transporting ATP synthase complex"/>
    <property type="evidence" value="ECO:0007669"/>
    <property type="project" value="UniProtKB-KW"/>
</dbReference>
<dbReference type="GO" id="GO:0046933">
    <property type="term" value="F:proton-transporting ATP synthase activity, rotational mechanism"/>
    <property type="evidence" value="ECO:0007669"/>
    <property type="project" value="UniProtKB-UniRule"/>
</dbReference>
<dbReference type="GO" id="GO:0046961">
    <property type="term" value="F:proton-transporting ATPase activity, rotational mechanism"/>
    <property type="evidence" value="ECO:0007669"/>
    <property type="project" value="TreeGrafter"/>
</dbReference>
<dbReference type="CDD" id="cd06503">
    <property type="entry name" value="ATP-synt_Fo_b"/>
    <property type="match status" value="1"/>
</dbReference>
<dbReference type="HAMAP" id="MF_01398">
    <property type="entry name" value="ATP_synth_b_bprime"/>
    <property type="match status" value="1"/>
</dbReference>
<dbReference type="InterPro" id="IPR002146">
    <property type="entry name" value="ATP_synth_b/b'su_bac/chlpt"/>
</dbReference>
<dbReference type="InterPro" id="IPR050059">
    <property type="entry name" value="ATP_synthase_B_chain"/>
</dbReference>
<dbReference type="NCBIfam" id="NF006611">
    <property type="entry name" value="PRK09173.1"/>
    <property type="match status" value="1"/>
</dbReference>
<dbReference type="PANTHER" id="PTHR33445:SF1">
    <property type="entry name" value="ATP SYNTHASE SUBUNIT B"/>
    <property type="match status" value="1"/>
</dbReference>
<dbReference type="PANTHER" id="PTHR33445">
    <property type="entry name" value="ATP SYNTHASE SUBUNIT B', CHLOROPLASTIC"/>
    <property type="match status" value="1"/>
</dbReference>
<dbReference type="Pfam" id="PF00430">
    <property type="entry name" value="ATP-synt_B"/>
    <property type="match status" value="1"/>
</dbReference>
<organism>
    <name type="scientific">Brucella abortus (strain 2308)</name>
    <dbReference type="NCBI Taxonomy" id="359391"/>
    <lineage>
        <taxon>Bacteria</taxon>
        <taxon>Pseudomonadati</taxon>
        <taxon>Pseudomonadota</taxon>
        <taxon>Alphaproteobacteria</taxon>
        <taxon>Hyphomicrobiales</taxon>
        <taxon>Brucellaceae</taxon>
        <taxon>Brucella/Ochrobactrum group</taxon>
        <taxon>Brucella</taxon>
    </lineage>
</organism>
<evidence type="ECO:0000255" key="1">
    <source>
        <dbReference type="HAMAP-Rule" id="MF_01398"/>
    </source>
</evidence>
<sequence>MDATFWAFIALVIFVAIVVYMKVPGMIGRTLDERADRIKKELEEARTLREEAQQLLAEYHRKRKEAEKEAGDIVASAEREAKALLEEAKRATEEYVARRNKLAEQKIATAETDAINAVRASAVDLAVAAAGSILAEKVDAKADGNLFNDALAQVKSHLN</sequence>
<protein>
    <recommendedName>
        <fullName evidence="1">ATP synthase subunit b 2</fullName>
    </recommendedName>
    <alternativeName>
        <fullName evidence="1">ATP synthase F(0) sector subunit b 2</fullName>
    </alternativeName>
    <alternativeName>
        <fullName evidence="1">ATPase subunit I 2</fullName>
    </alternativeName>
    <alternativeName>
        <fullName evidence="1">F-type ATPase subunit b 2</fullName>
        <shortName evidence="1">F-ATPase subunit b 2</shortName>
    </alternativeName>
</protein>
<proteinExistence type="inferred from homology"/>
<feature type="chain" id="PRO_0000368366" description="ATP synthase subunit b 2">
    <location>
        <begin position="1"/>
        <end position="159"/>
    </location>
</feature>
<feature type="transmembrane region" description="Helical" evidence="1">
    <location>
        <begin position="1"/>
        <end position="21"/>
    </location>
</feature>